<organism>
    <name type="scientific">Homo sapiens</name>
    <name type="common">Human</name>
    <dbReference type="NCBI Taxonomy" id="9606"/>
    <lineage>
        <taxon>Eukaryota</taxon>
        <taxon>Metazoa</taxon>
        <taxon>Chordata</taxon>
        <taxon>Craniata</taxon>
        <taxon>Vertebrata</taxon>
        <taxon>Euteleostomi</taxon>
        <taxon>Mammalia</taxon>
        <taxon>Eutheria</taxon>
        <taxon>Euarchontoglires</taxon>
        <taxon>Primates</taxon>
        <taxon>Haplorrhini</taxon>
        <taxon>Catarrhini</taxon>
        <taxon>Hominidae</taxon>
        <taxon>Homo</taxon>
    </lineage>
</organism>
<accession>P51686</accession>
<accession>Q4VBM3</accession>
<accession>Q549E0</accession>
<accession>Q9UQQ6</accession>
<dbReference type="EMBL" id="AJ132337">
    <property type="protein sequence ID" value="CAB43477.1"/>
    <property type="molecule type" value="mRNA"/>
</dbReference>
<dbReference type="EMBL" id="AF145439">
    <property type="protein sequence ID" value="AAF66699.1"/>
    <property type="molecule type" value="mRNA"/>
</dbReference>
<dbReference type="EMBL" id="AF145440">
    <property type="protein sequence ID" value="AAF66700.1"/>
    <property type="molecule type" value="mRNA"/>
</dbReference>
<dbReference type="EMBL" id="U45982">
    <property type="protein sequence ID" value="AAA93319.1"/>
    <property type="molecule type" value="Genomic_DNA"/>
</dbReference>
<dbReference type="EMBL" id="AY242127">
    <property type="protein sequence ID" value="AAO92294.1"/>
    <property type="molecule type" value="Genomic_DNA"/>
</dbReference>
<dbReference type="EMBL" id="BC069678">
    <property type="protein sequence ID" value="AAH69678.1"/>
    <property type="molecule type" value="mRNA"/>
</dbReference>
<dbReference type="EMBL" id="BC095516">
    <property type="protein sequence ID" value="AAH95516.1"/>
    <property type="status" value="ALT_INIT"/>
    <property type="molecule type" value="mRNA"/>
</dbReference>
<dbReference type="CCDS" id="CCDS2732.1">
    <molecule id="P51686-1"/>
</dbReference>
<dbReference type="CCDS" id="CCDS2733.1">
    <molecule id="P51686-2"/>
</dbReference>
<dbReference type="RefSeq" id="NP_001243298.1">
    <molecule id="P51686-2"/>
    <property type="nucleotide sequence ID" value="NM_001256369.2"/>
</dbReference>
<dbReference type="RefSeq" id="NP_001373376.1">
    <molecule id="P51686-1"/>
    <property type="nucleotide sequence ID" value="NM_001386447.1"/>
</dbReference>
<dbReference type="RefSeq" id="NP_001373377.1">
    <molecule id="P51686-1"/>
    <property type="nucleotide sequence ID" value="NM_001386448.1"/>
</dbReference>
<dbReference type="RefSeq" id="NP_006632.2">
    <molecule id="P51686-2"/>
    <property type="nucleotide sequence ID" value="NM_006641.3"/>
</dbReference>
<dbReference type="RefSeq" id="NP_112477.1">
    <molecule id="P51686-1"/>
    <property type="nucleotide sequence ID" value="NM_031200.3"/>
</dbReference>
<dbReference type="RefSeq" id="XP_011531614.1">
    <property type="nucleotide sequence ID" value="XM_011533312.2"/>
</dbReference>
<dbReference type="PDB" id="5LWE">
    <property type="method" value="X-ray"/>
    <property type="resolution" value="2.80 A"/>
    <property type="chains" value="A/B=24-341"/>
</dbReference>
<dbReference type="PDBsum" id="5LWE"/>
<dbReference type="SMR" id="P51686"/>
<dbReference type="BioGRID" id="116017">
    <property type="interactions" value="18"/>
</dbReference>
<dbReference type="DIP" id="DIP-5884N"/>
<dbReference type="FunCoup" id="P51686">
    <property type="interactions" value="760"/>
</dbReference>
<dbReference type="IntAct" id="P51686">
    <property type="interactions" value="18"/>
</dbReference>
<dbReference type="MINT" id="P51686"/>
<dbReference type="STRING" id="9606.ENSP00000350256"/>
<dbReference type="BindingDB" id="P51686"/>
<dbReference type="ChEMBL" id="CHEMBL5815"/>
<dbReference type="DrugBank" id="DB15250">
    <property type="generic name" value="Vercirnon"/>
</dbReference>
<dbReference type="GuidetoPHARMACOLOGY" id="66"/>
<dbReference type="GlyCosmos" id="P51686">
    <property type="glycosylation" value="1 site, No reported glycans"/>
</dbReference>
<dbReference type="GlyGen" id="P51686">
    <property type="glycosylation" value="1 site"/>
</dbReference>
<dbReference type="iPTMnet" id="P51686"/>
<dbReference type="PhosphoSitePlus" id="P51686"/>
<dbReference type="BioMuta" id="CCR9"/>
<dbReference type="DMDM" id="114152781"/>
<dbReference type="PaxDb" id="9606-ENSP00000350256"/>
<dbReference type="PeptideAtlas" id="P51686"/>
<dbReference type="ProteomicsDB" id="56370">
    <molecule id="P51686-1"/>
</dbReference>
<dbReference type="ProteomicsDB" id="56371">
    <molecule id="P51686-2"/>
</dbReference>
<dbReference type="Antibodypedia" id="3479">
    <property type="antibodies" value="637 antibodies from 37 providers"/>
</dbReference>
<dbReference type="DNASU" id="10803"/>
<dbReference type="Ensembl" id="ENST00000357632.7">
    <molecule id="P51686-1"/>
    <property type="protein sequence ID" value="ENSP00000350256.2"/>
    <property type="gene ID" value="ENSG00000173585.18"/>
</dbReference>
<dbReference type="Ensembl" id="ENST00000395963.2">
    <molecule id="P51686-2"/>
    <property type="protein sequence ID" value="ENSP00000379292.2"/>
    <property type="gene ID" value="ENSG00000173585.18"/>
</dbReference>
<dbReference type="Ensembl" id="ENST00000706789.1">
    <molecule id="P51686-2"/>
    <property type="protein sequence ID" value="ENSP00000516552.1"/>
    <property type="gene ID" value="ENSG00000173585.18"/>
</dbReference>
<dbReference type="GeneID" id="10803"/>
<dbReference type="KEGG" id="hsa:10803"/>
<dbReference type="MANE-Select" id="ENST00000357632.7">
    <property type="protein sequence ID" value="ENSP00000350256.2"/>
    <property type="RefSeq nucleotide sequence ID" value="NM_031200.3"/>
    <property type="RefSeq protein sequence ID" value="NP_112477.1"/>
</dbReference>
<dbReference type="UCSC" id="uc003coz.3">
    <molecule id="P51686-1"/>
    <property type="organism name" value="human"/>
</dbReference>
<dbReference type="AGR" id="HGNC:1610"/>
<dbReference type="CTD" id="10803"/>
<dbReference type="DisGeNET" id="10803"/>
<dbReference type="GeneCards" id="CCR9"/>
<dbReference type="HGNC" id="HGNC:1610">
    <property type="gene designation" value="CCR9"/>
</dbReference>
<dbReference type="HPA" id="ENSG00000173585">
    <property type="expression patterns" value="Tissue enriched (lymphoid)"/>
</dbReference>
<dbReference type="MIM" id="604738">
    <property type="type" value="gene"/>
</dbReference>
<dbReference type="neXtProt" id="NX_P51686"/>
<dbReference type="OpenTargets" id="ENSG00000173585"/>
<dbReference type="PharmGKB" id="PA26174"/>
<dbReference type="VEuPathDB" id="HostDB:ENSG00000173585"/>
<dbReference type="eggNOG" id="KOG3656">
    <property type="taxonomic scope" value="Eukaryota"/>
</dbReference>
<dbReference type="GeneTree" id="ENSGT01030000234667"/>
<dbReference type="HOGENOM" id="CLU_009579_8_3_1"/>
<dbReference type="InParanoid" id="P51686"/>
<dbReference type="OMA" id="FPYNCVL"/>
<dbReference type="OrthoDB" id="9942559at2759"/>
<dbReference type="PAN-GO" id="P51686">
    <property type="GO annotations" value="7 GO annotations based on evolutionary models"/>
</dbReference>
<dbReference type="PhylomeDB" id="P51686"/>
<dbReference type="TreeFam" id="TF330966"/>
<dbReference type="PathwayCommons" id="P51686"/>
<dbReference type="Reactome" id="R-HSA-380108">
    <property type="pathway name" value="Chemokine receptors bind chemokines"/>
</dbReference>
<dbReference type="Reactome" id="R-HSA-418594">
    <property type="pathway name" value="G alpha (i) signalling events"/>
</dbReference>
<dbReference type="SignaLink" id="P51686"/>
<dbReference type="SIGNOR" id="P51686"/>
<dbReference type="BioGRID-ORCS" id="10803">
    <property type="hits" value="6 hits in 1147 CRISPR screens"/>
</dbReference>
<dbReference type="GeneWiki" id="CCR9"/>
<dbReference type="GenomeRNAi" id="10803"/>
<dbReference type="Pharos" id="P51686">
    <property type="development level" value="Tchem"/>
</dbReference>
<dbReference type="PRO" id="PR:P51686"/>
<dbReference type="Proteomes" id="UP000005640">
    <property type="component" value="Chromosome 3"/>
</dbReference>
<dbReference type="RNAct" id="P51686">
    <property type="molecule type" value="protein"/>
</dbReference>
<dbReference type="Bgee" id="ENSG00000173585">
    <property type="expression patterns" value="Expressed in thymus and 78 other cell types or tissues"/>
</dbReference>
<dbReference type="ExpressionAtlas" id="P51686">
    <property type="expression patterns" value="baseline and differential"/>
</dbReference>
<dbReference type="GO" id="GO:0009986">
    <property type="term" value="C:cell surface"/>
    <property type="evidence" value="ECO:0000314"/>
    <property type="project" value="UniProtKB"/>
</dbReference>
<dbReference type="GO" id="GO:0009897">
    <property type="term" value="C:external side of plasma membrane"/>
    <property type="evidence" value="ECO:0000318"/>
    <property type="project" value="GO_Central"/>
</dbReference>
<dbReference type="GO" id="GO:0005886">
    <property type="term" value="C:plasma membrane"/>
    <property type="evidence" value="ECO:0000304"/>
    <property type="project" value="Reactome"/>
</dbReference>
<dbReference type="GO" id="GO:0019957">
    <property type="term" value="F:C-C chemokine binding"/>
    <property type="evidence" value="ECO:0000318"/>
    <property type="project" value="GO_Central"/>
</dbReference>
<dbReference type="GO" id="GO:0016493">
    <property type="term" value="F:C-C chemokine receptor activity"/>
    <property type="evidence" value="ECO:0000318"/>
    <property type="project" value="GO_Central"/>
</dbReference>
<dbReference type="GO" id="GO:0004950">
    <property type="term" value="F:chemokine receptor activity"/>
    <property type="evidence" value="ECO:0000304"/>
    <property type="project" value="ProtInc"/>
</dbReference>
<dbReference type="GO" id="GO:0019722">
    <property type="term" value="P:calcium-mediated signaling"/>
    <property type="evidence" value="ECO:0000318"/>
    <property type="project" value="GO_Central"/>
</dbReference>
<dbReference type="GO" id="GO:0002305">
    <property type="term" value="P:CD8-positive, gamma-delta intraepithelial T cell differentiation"/>
    <property type="evidence" value="ECO:0007669"/>
    <property type="project" value="Ensembl"/>
</dbReference>
<dbReference type="GO" id="GO:0060326">
    <property type="term" value="P:cell chemotaxis"/>
    <property type="evidence" value="ECO:0000318"/>
    <property type="project" value="GO_Central"/>
</dbReference>
<dbReference type="GO" id="GO:0006968">
    <property type="term" value="P:cellular defense response"/>
    <property type="evidence" value="ECO:0000304"/>
    <property type="project" value="ProtInc"/>
</dbReference>
<dbReference type="GO" id="GO:0006935">
    <property type="term" value="P:chemotaxis"/>
    <property type="evidence" value="ECO:0000304"/>
    <property type="project" value="ProtInc"/>
</dbReference>
<dbReference type="GO" id="GO:0007186">
    <property type="term" value="P:G protein-coupled receptor signaling pathway"/>
    <property type="evidence" value="ECO:0000304"/>
    <property type="project" value="ProtInc"/>
</dbReference>
<dbReference type="GO" id="GO:0006955">
    <property type="term" value="P:immune response"/>
    <property type="evidence" value="ECO:0000318"/>
    <property type="project" value="GO_Central"/>
</dbReference>
<dbReference type="GO" id="GO:0007204">
    <property type="term" value="P:positive regulation of cytosolic calcium ion concentration"/>
    <property type="evidence" value="ECO:0000318"/>
    <property type="project" value="GO_Central"/>
</dbReference>
<dbReference type="CDD" id="cd15174">
    <property type="entry name" value="7tmA_CCR9"/>
    <property type="match status" value="1"/>
</dbReference>
<dbReference type="FunFam" id="1.20.1070.10:FF:000035">
    <property type="entry name" value="C-C chemokine receptor type 6"/>
    <property type="match status" value="1"/>
</dbReference>
<dbReference type="Gene3D" id="1.20.1070.10">
    <property type="entry name" value="Rhodopsin 7-helix transmembrane proteins"/>
    <property type="match status" value="1"/>
</dbReference>
<dbReference type="InterPro" id="IPR050119">
    <property type="entry name" value="CCR1-9-like"/>
</dbReference>
<dbReference type="InterPro" id="IPR004069">
    <property type="entry name" value="Chemokine_CCR9"/>
</dbReference>
<dbReference type="InterPro" id="IPR000355">
    <property type="entry name" value="Chemokine_rcpt"/>
</dbReference>
<dbReference type="InterPro" id="IPR000276">
    <property type="entry name" value="GPCR_Rhodpsn"/>
</dbReference>
<dbReference type="InterPro" id="IPR017452">
    <property type="entry name" value="GPCR_Rhodpsn_7TM"/>
</dbReference>
<dbReference type="PANTHER" id="PTHR10489:SF664">
    <property type="entry name" value="C-C CHEMOKINE RECEPTOR TYPE 9"/>
    <property type="match status" value="1"/>
</dbReference>
<dbReference type="PANTHER" id="PTHR10489">
    <property type="entry name" value="CELL ADHESION MOLECULE"/>
    <property type="match status" value="1"/>
</dbReference>
<dbReference type="Pfam" id="PF00001">
    <property type="entry name" value="7tm_1"/>
    <property type="match status" value="1"/>
</dbReference>
<dbReference type="PRINTS" id="PR00657">
    <property type="entry name" value="CCCHEMOKINER"/>
</dbReference>
<dbReference type="PRINTS" id="PR01531">
    <property type="entry name" value="CHEMOKINER9"/>
</dbReference>
<dbReference type="PRINTS" id="PR00237">
    <property type="entry name" value="GPCRRHODOPSN"/>
</dbReference>
<dbReference type="SUPFAM" id="SSF81321">
    <property type="entry name" value="Family A G protein-coupled receptor-like"/>
    <property type="match status" value="1"/>
</dbReference>
<dbReference type="PROSITE" id="PS00237">
    <property type="entry name" value="G_PROTEIN_RECEP_F1_1"/>
    <property type="match status" value="1"/>
</dbReference>
<dbReference type="PROSITE" id="PS50262">
    <property type="entry name" value="G_PROTEIN_RECEP_F1_2"/>
    <property type="match status" value="1"/>
</dbReference>
<proteinExistence type="evidence at protein level"/>
<sequence length="369" mass="42016">MTPTDFTSPIPNMADDYGSESTSSMEDYVNFNFTDFYCEKNNVRQFASHFLPPLYWLVFIVGALGNSLVILVYWYCTRVKTMTDMFLLNLAIADLLFLVTLPFWAIAAADQWKFQTFMCKVVNSMYKMNFYSCVLLIMCISVDRYIAIAQAMRAHTWREKRLLYSKMVCFTIWVLAAALCIPEILYSQIKEESGIAICTMVYPSDESTKLKSAVLTLKVILGFFLPFVVMACCYTIIIHTLIQAKKSSKHKALKVTITVLTVFVLSQFPYNCILLVQTIDAYAMFISNCAVSTNIDICFQVTQTIAFFHSCLNPVLYVFVGERFRRDLVKTLKNLGCISQAQWVSFTRREGSLKLSSMLLETTSGALSL</sequence>
<name>CCR9_HUMAN</name>
<gene>
    <name type="primary">CCR9</name>
    <name type="synonym">GPR28</name>
</gene>
<keyword id="KW-0002">3D-structure</keyword>
<keyword id="KW-0025">Alternative splicing</keyword>
<keyword id="KW-1003">Cell membrane</keyword>
<keyword id="KW-1015">Disulfide bond</keyword>
<keyword id="KW-0297">G-protein coupled receptor</keyword>
<keyword id="KW-0325">Glycoprotein</keyword>
<keyword id="KW-0945">Host-virus interaction</keyword>
<keyword id="KW-0472">Membrane</keyword>
<keyword id="KW-0675">Receptor</keyword>
<keyword id="KW-1185">Reference proteome</keyword>
<keyword id="KW-0807">Transducer</keyword>
<keyword id="KW-0812">Transmembrane</keyword>
<keyword id="KW-1133">Transmembrane helix</keyword>
<comment type="function">
    <text evidence="3 4">Receptor for chemokine SCYA25/TECK. Subsequently transduces a signal by increasing the intracellular calcium ions level.</text>
</comment>
<comment type="function">
    <text>(Microbial infection) Alternative coreceptor with CD4 for HIV-1 infection.</text>
</comment>
<comment type="subcellular location">
    <subcellularLocation>
        <location evidence="10">Cell membrane</location>
        <topology evidence="10">Multi-pass membrane protein</topology>
    </subcellularLocation>
</comment>
<comment type="alternative products">
    <event type="alternative splicing"/>
    <isoform>
        <id>P51686-1</id>
        <name>1</name>
        <name>CCR9A</name>
        <sequence type="displayed"/>
    </isoform>
    <isoform>
        <id>P51686-2</id>
        <name>2</name>
        <name>CCR9B</name>
        <sequence type="described" ref="VSP_020286"/>
    </isoform>
</comment>
<comment type="tissue specificity">
    <text evidence="3 4">Highly expressed in the thymus and low in lymph nodes and spleen.</text>
</comment>
<comment type="miscellaneous">
    <text>EC50 of SCYA25/TECK for isoform 1 is lower than for isoform 2.</text>
</comment>
<comment type="similarity">
    <text evidence="2">Belongs to the G-protein coupled receptor 1 family.</text>
</comment>
<comment type="sequence caution" evidence="9">
    <conflict type="erroneous initiation">
        <sequence resource="EMBL-CDS" id="AAH95516"/>
    </conflict>
    <text>Extended N-terminus.</text>
</comment>
<comment type="online information" name="Wikipedia">
    <link uri="https://en.wikipedia.org/wiki/CC_chemokine_receptors"/>
    <text>CC chemokine receptors entry</text>
</comment>
<comment type="online information" name="Atlas of Genetics and Cytogenetics in Oncology and Haematology">
    <link uri="https://atlasgeneticsoncology.org/gene/44380/CCR9"/>
</comment>
<reference key="1">
    <citation type="journal article" date="1999" name="J. Immunol.">
        <title>Identification of the orphan chemokine receptor GPR-9-6 as CCR9, the receptor for the chemokine TECK.</title>
        <authorList>
            <person name="Zaballos A."/>
            <person name="Gutierrez J."/>
            <person name="Varona R."/>
            <person name="Ardavin C."/>
            <person name="Marquez G."/>
        </authorList>
    </citation>
    <scope>NUCLEOTIDE SEQUENCE [MRNA] (ISOFORM 1)</scope>
    <scope>TISSUE SPECIFICITY</scope>
    <scope>FUNCTION</scope>
</reference>
<reference key="2">
    <citation type="journal article" date="2000" name="J. Immunol.">
        <title>CCR9A and CCR9B: two receptors for the chemokine CCL25/TECK/Ck beta-15 that differ in their sensitivities to ligand.</title>
        <authorList>
            <person name="Yu C.-R."/>
            <person name="Peden K.W.C."/>
            <person name="Zaitseva M.B."/>
            <person name="Golding H."/>
            <person name="Farber J.M."/>
        </authorList>
    </citation>
    <scope>NUCLEOTIDE SEQUENCE [MRNA] (ISOFORMS 1 AND 2)</scope>
    <scope>TISSUE SPECIFICITY</scope>
    <scope>FUNCTION</scope>
</reference>
<reference key="3">
    <citation type="submission" date="1996-04" db="EMBL/GenBank/DDBJ databases">
        <title>Cloning, tissue distribution and chromosomal localization of two potential G-protein-linked chemokine receptors.</title>
        <authorList>
            <person name="Lautens L.L."/>
            <person name="Tiffany H.L."/>
            <person name="Gao J.-L."/>
            <person name="Modi W."/>
            <person name="Murphy P.M."/>
            <person name="Bonner T.I."/>
        </authorList>
    </citation>
    <scope>NUCLEOTIDE SEQUENCE [GENOMIC DNA] (ISOFORM 2)</scope>
</reference>
<reference key="4">
    <citation type="submission" date="2003-02" db="EMBL/GenBank/DDBJ databases">
        <title>cDNA clones of human proteins involved in signal transduction sequenced by the Guthrie cDNA resource center (www.cdna.org).</title>
        <authorList>
            <person name="Warren C.N."/>
            <person name="Aronstam R.S."/>
            <person name="Sharma S.V."/>
        </authorList>
    </citation>
    <scope>NUCLEOTIDE SEQUENCE [LARGE SCALE MRNA] (ISOFORM 2)</scope>
</reference>
<reference key="5">
    <citation type="journal article" date="2004" name="Genome Res.">
        <title>The status, quality, and expansion of the NIH full-length cDNA project: the Mammalian Gene Collection (MGC).</title>
        <authorList>
            <consortium name="The MGC Project Team"/>
        </authorList>
    </citation>
    <scope>NUCLEOTIDE SEQUENCE [LARGE SCALE MRNA] (ISOFORMS 1 AND 2)</scope>
</reference>
<reference key="6">
    <citation type="journal article" date="2016" name="Nature">
        <title>Intracellular allosteric antagonism of the CCR9 receptor.</title>
        <authorList>
            <person name="Oswald C."/>
            <person name="Rappas M."/>
            <person name="Kean J."/>
            <person name="Dore A.S."/>
            <person name="Errey J.C."/>
            <person name="Bennett K."/>
            <person name="Deflorian F."/>
            <person name="Christopher J.A."/>
            <person name="Jazayeri A."/>
            <person name="Mason J.S."/>
            <person name="Congreve M."/>
            <person name="Cooke R.M."/>
            <person name="Marshall F.H."/>
        </authorList>
    </citation>
    <scope>X-RAY CRYSTALLOGRAPHY (2.80 ANGSTROMS) OF 24-341</scope>
    <scope>SUBCELLULAR LOCATION</scope>
    <scope>DISULFIDE BOND</scope>
</reference>
<protein>
    <recommendedName>
        <fullName>C-C chemokine receptor type 9</fullName>
        <shortName>C-C CKR-9</shortName>
        <shortName>CC-CKR-9</shortName>
        <shortName>CCR-9</shortName>
    </recommendedName>
    <alternativeName>
        <fullName>G-protein coupled receptor 28</fullName>
    </alternativeName>
    <alternativeName>
        <fullName>GPR-9-6</fullName>
    </alternativeName>
    <cdAntigenName>CDw199</cdAntigenName>
</protein>
<evidence type="ECO:0000255" key="1"/>
<evidence type="ECO:0000255" key="2">
    <source>
        <dbReference type="PROSITE-ProRule" id="PRU00521"/>
    </source>
</evidence>
<evidence type="ECO:0000269" key="3">
    <source>
    </source>
</evidence>
<evidence type="ECO:0000269" key="4">
    <source>
    </source>
</evidence>
<evidence type="ECO:0000269" key="5">
    <source>
    </source>
</evidence>
<evidence type="ECO:0000303" key="6">
    <source>
    </source>
</evidence>
<evidence type="ECO:0000303" key="7">
    <source>
    </source>
</evidence>
<evidence type="ECO:0000303" key="8">
    <source ref="4"/>
</evidence>
<evidence type="ECO:0000305" key="9"/>
<evidence type="ECO:0000305" key="10">
    <source>
    </source>
</evidence>
<evidence type="ECO:0007744" key="11">
    <source>
        <dbReference type="PDB" id="5LWE"/>
    </source>
</evidence>
<evidence type="ECO:0007829" key="12">
    <source>
        <dbReference type="PDB" id="5LWE"/>
    </source>
</evidence>
<feature type="chain" id="PRO_0000069291" description="C-C chemokine receptor type 9">
    <location>
        <begin position="1"/>
        <end position="369"/>
    </location>
</feature>
<feature type="topological domain" description="Extracellular" evidence="5">
    <location>
        <begin position="1"/>
        <end position="48"/>
    </location>
</feature>
<feature type="transmembrane region" description="Helical; Name=1" evidence="5">
    <location>
        <begin position="49"/>
        <end position="74"/>
    </location>
</feature>
<feature type="topological domain" description="Cytoplasmic" evidence="5">
    <location>
        <begin position="75"/>
        <end position="85"/>
    </location>
</feature>
<feature type="transmembrane region" description="Helical; Name=2" evidence="5">
    <location>
        <begin position="86"/>
        <end position="109"/>
    </location>
</feature>
<feature type="topological domain" description="Extracellular" evidence="5">
    <location>
        <begin position="110"/>
        <end position="120"/>
    </location>
</feature>
<feature type="transmembrane region" description="Helical; Name=3" evidence="5">
    <location>
        <begin position="121"/>
        <end position="150"/>
    </location>
</feature>
<feature type="topological domain" description="Cytoplasmic" evidence="5">
    <location>
        <begin position="151"/>
        <end position="159"/>
    </location>
</feature>
<feature type="transmembrane region" description="Helical; Name=4" evidence="5">
    <location>
        <begin position="160"/>
        <end position="185"/>
    </location>
</feature>
<feature type="topological domain" description="Extracellular" evidence="5">
    <location>
        <begin position="186"/>
        <end position="208"/>
    </location>
</feature>
<feature type="transmembrane region" description="Helical; Name=5" evidence="5">
    <location>
        <begin position="209"/>
        <end position="243"/>
    </location>
</feature>
<feature type="topological domain" description="Cytoplasmic" evidence="5">
    <location>
        <begin position="244"/>
        <end position="248"/>
    </location>
</feature>
<feature type="transmembrane region" description="Helical; Name=6" evidence="5">
    <location>
        <begin position="249"/>
        <end position="283"/>
    </location>
</feature>
<feature type="topological domain" description="Extracellular" evidence="5">
    <location>
        <begin position="284"/>
        <end position="290"/>
    </location>
</feature>
<feature type="transmembrane region" description="Helical; Name=7" evidence="5">
    <location>
        <begin position="291"/>
        <end position="321"/>
    </location>
</feature>
<feature type="topological domain" description="Cytoplasmic" evidence="1 5">
    <location>
        <begin position="322"/>
        <end position="369"/>
    </location>
</feature>
<feature type="glycosylation site" description="N-linked (GlcNAc...) asparagine" evidence="1">
    <location>
        <position position="32"/>
    </location>
</feature>
<feature type="disulfide bond" evidence="5">
    <location>
        <begin position="38"/>
        <end position="289"/>
    </location>
</feature>
<feature type="disulfide bond" evidence="2 5 11">
    <location>
        <begin position="119"/>
        <end position="198"/>
    </location>
</feature>
<feature type="splice variant" id="VSP_020286" description="In isoform 2." evidence="6 7 8">
    <location>
        <begin position="1"/>
        <end position="12"/>
    </location>
</feature>
<feature type="sequence variant" id="VAR_029208" description="In dbSNP:rs45530037.">
    <original>I</original>
    <variation>V</variation>
    <location>
        <position position="92"/>
    </location>
</feature>
<feature type="sequence variant" id="VAR_020068" description="In dbSNP:rs12721497.">
    <original>M</original>
    <variation>V</variation>
    <location>
        <position position="284"/>
    </location>
</feature>
<feature type="helix" evidence="12">
    <location>
        <begin position="33"/>
        <end position="37"/>
    </location>
</feature>
<feature type="helix" evidence="12">
    <location>
        <begin position="45"/>
        <end position="75"/>
    </location>
</feature>
<feature type="helix" evidence="12">
    <location>
        <begin position="82"/>
        <end position="106"/>
    </location>
</feature>
<feature type="helix" evidence="12">
    <location>
        <begin position="117"/>
        <end position="148"/>
    </location>
</feature>
<feature type="helix" evidence="12">
    <location>
        <begin position="151"/>
        <end position="154"/>
    </location>
</feature>
<feature type="helix" evidence="12">
    <location>
        <begin position="155"/>
        <end position="157"/>
    </location>
</feature>
<feature type="helix" evidence="12">
    <location>
        <begin position="158"/>
        <end position="179"/>
    </location>
</feature>
<feature type="helix" evidence="12">
    <location>
        <begin position="181"/>
        <end position="185"/>
    </location>
</feature>
<feature type="helix" evidence="12">
    <location>
        <begin position="209"/>
        <end position="222"/>
    </location>
</feature>
<feature type="helix" evidence="12">
    <location>
        <begin position="224"/>
        <end position="243"/>
    </location>
</feature>
<feature type="helix" evidence="12">
    <location>
        <begin position="249"/>
        <end position="252"/>
    </location>
</feature>
<feature type="helix" evidence="12">
    <location>
        <begin position="254"/>
        <end position="282"/>
    </location>
</feature>
<feature type="helix" evidence="12">
    <location>
        <begin position="289"/>
        <end position="307"/>
    </location>
</feature>
<feature type="helix" evidence="12">
    <location>
        <begin position="308"/>
        <end position="311"/>
    </location>
</feature>
<feature type="helix" evidence="12">
    <location>
        <begin position="313"/>
        <end position="320"/>
    </location>
</feature>
<feature type="helix" evidence="12">
    <location>
        <begin position="324"/>
        <end position="341"/>
    </location>
</feature>